<protein>
    <recommendedName>
        <fullName evidence="1">Ribosome maturation factor RimM</fullName>
    </recommendedName>
</protein>
<organism>
    <name type="scientific">Desulfitobacterium hafniense (strain Y51)</name>
    <dbReference type="NCBI Taxonomy" id="138119"/>
    <lineage>
        <taxon>Bacteria</taxon>
        <taxon>Bacillati</taxon>
        <taxon>Bacillota</taxon>
        <taxon>Clostridia</taxon>
        <taxon>Eubacteriales</taxon>
        <taxon>Desulfitobacteriaceae</taxon>
        <taxon>Desulfitobacterium</taxon>
    </lineage>
</organism>
<feature type="chain" id="PRO_1000070959" description="Ribosome maturation factor RimM">
    <location>
        <begin position="1"/>
        <end position="170"/>
    </location>
</feature>
<feature type="domain" description="PRC barrel" evidence="1">
    <location>
        <begin position="92"/>
        <end position="163"/>
    </location>
</feature>
<sequence length="170" mass="19167">MDEVLIGEVIKPHGVQGEIKVYPITDNPKRFRKLKEVILVQNQEQRRLKVLHANVHQSEVYLTLEGINTRDKAEAIRGWAVKADRDQVPPLKEGWYYFELEGMQVYEGDVLLGTLAQVIQTGANDVYLVKGDKGEICVPALKTVVKHVDVAGKRMDVELPPGLIDGEELR</sequence>
<dbReference type="EMBL" id="AP008230">
    <property type="protein sequence ID" value="BAE84384.1"/>
    <property type="molecule type" value="Genomic_DNA"/>
</dbReference>
<dbReference type="RefSeq" id="WP_005813199.1">
    <property type="nucleotide sequence ID" value="NC_007907.1"/>
</dbReference>
<dbReference type="SMR" id="Q24UA8"/>
<dbReference type="STRING" id="138119.DSY2595"/>
<dbReference type="KEGG" id="dsy:DSY2595"/>
<dbReference type="eggNOG" id="COG0806">
    <property type="taxonomic scope" value="Bacteria"/>
</dbReference>
<dbReference type="HOGENOM" id="CLU_077636_3_2_9"/>
<dbReference type="Proteomes" id="UP000001946">
    <property type="component" value="Chromosome"/>
</dbReference>
<dbReference type="GO" id="GO:0005737">
    <property type="term" value="C:cytoplasm"/>
    <property type="evidence" value="ECO:0007669"/>
    <property type="project" value="UniProtKB-SubCell"/>
</dbReference>
<dbReference type="GO" id="GO:0005840">
    <property type="term" value="C:ribosome"/>
    <property type="evidence" value="ECO:0007669"/>
    <property type="project" value="InterPro"/>
</dbReference>
<dbReference type="GO" id="GO:0043022">
    <property type="term" value="F:ribosome binding"/>
    <property type="evidence" value="ECO:0007669"/>
    <property type="project" value="InterPro"/>
</dbReference>
<dbReference type="GO" id="GO:0042274">
    <property type="term" value="P:ribosomal small subunit biogenesis"/>
    <property type="evidence" value="ECO:0007669"/>
    <property type="project" value="UniProtKB-UniRule"/>
</dbReference>
<dbReference type="GO" id="GO:0006364">
    <property type="term" value="P:rRNA processing"/>
    <property type="evidence" value="ECO:0007669"/>
    <property type="project" value="UniProtKB-UniRule"/>
</dbReference>
<dbReference type="Gene3D" id="2.30.30.240">
    <property type="entry name" value="PRC-barrel domain"/>
    <property type="match status" value="1"/>
</dbReference>
<dbReference type="Gene3D" id="2.40.30.60">
    <property type="entry name" value="RimM"/>
    <property type="match status" value="1"/>
</dbReference>
<dbReference type="HAMAP" id="MF_00014">
    <property type="entry name" value="Ribosome_mat_RimM"/>
    <property type="match status" value="1"/>
</dbReference>
<dbReference type="InterPro" id="IPR011033">
    <property type="entry name" value="PRC_barrel-like_sf"/>
</dbReference>
<dbReference type="InterPro" id="IPR056792">
    <property type="entry name" value="PRC_RimM"/>
</dbReference>
<dbReference type="InterPro" id="IPR011961">
    <property type="entry name" value="RimM"/>
</dbReference>
<dbReference type="InterPro" id="IPR002676">
    <property type="entry name" value="RimM_N"/>
</dbReference>
<dbReference type="InterPro" id="IPR036976">
    <property type="entry name" value="RimM_N_sf"/>
</dbReference>
<dbReference type="InterPro" id="IPR009000">
    <property type="entry name" value="Transl_B-barrel_sf"/>
</dbReference>
<dbReference type="NCBIfam" id="TIGR02273">
    <property type="entry name" value="16S_RimM"/>
    <property type="match status" value="1"/>
</dbReference>
<dbReference type="PANTHER" id="PTHR33692">
    <property type="entry name" value="RIBOSOME MATURATION FACTOR RIMM"/>
    <property type="match status" value="1"/>
</dbReference>
<dbReference type="PANTHER" id="PTHR33692:SF1">
    <property type="entry name" value="RIBOSOME MATURATION FACTOR RIMM"/>
    <property type="match status" value="1"/>
</dbReference>
<dbReference type="Pfam" id="PF24986">
    <property type="entry name" value="PRC_RimM"/>
    <property type="match status" value="1"/>
</dbReference>
<dbReference type="Pfam" id="PF01782">
    <property type="entry name" value="RimM"/>
    <property type="match status" value="1"/>
</dbReference>
<dbReference type="SUPFAM" id="SSF50346">
    <property type="entry name" value="PRC-barrel domain"/>
    <property type="match status" value="1"/>
</dbReference>
<dbReference type="SUPFAM" id="SSF50447">
    <property type="entry name" value="Translation proteins"/>
    <property type="match status" value="1"/>
</dbReference>
<name>RIMM_DESHY</name>
<gene>
    <name evidence="1" type="primary">rimM</name>
    <name type="ordered locus">DSY2595</name>
</gene>
<accession>Q24UA8</accession>
<evidence type="ECO:0000255" key="1">
    <source>
        <dbReference type="HAMAP-Rule" id="MF_00014"/>
    </source>
</evidence>
<reference key="1">
    <citation type="journal article" date="2006" name="J. Bacteriol.">
        <title>Complete genome sequence of the dehalorespiring bacterium Desulfitobacterium hafniense Y51 and comparison with Dehalococcoides ethenogenes 195.</title>
        <authorList>
            <person name="Nonaka H."/>
            <person name="Keresztes G."/>
            <person name="Shinoda Y."/>
            <person name="Ikenaga Y."/>
            <person name="Abe M."/>
            <person name="Naito K."/>
            <person name="Inatomi K."/>
            <person name="Furukawa K."/>
            <person name="Inui M."/>
            <person name="Yukawa H."/>
        </authorList>
    </citation>
    <scope>NUCLEOTIDE SEQUENCE [LARGE SCALE GENOMIC DNA]</scope>
    <source>
        <strain>Y51</strain>
    </source>
</reference>
<comment type="function">
    <text evidence="1">An accessory protein needed during the final step in the assembly of 30S ribosomal subunit, possibly for assembly of the head region. Essential for efficient processing of 16S rRNA. May be needed both before and after RbfA during the maturation of 16S rRNA. It has affinity for free ribosomal 30S subunits but not for 70S ribosomes.</text>
</comment>
<comment type="subunit">
    <text evidence="1">Binds ribosomal protein uS19.</text>
</comment>
<comment type="subcellular location">
    <subcellularLocation>
        <location evidence="1">Cytoplasm</location>
    </subcellularLocation>
</comment>
<comment type="domain">
    <text evidence="1">The PRC barrel domain binds ribosomal protein uS19.</text>
</comment>
<comment type="similarity">
    <text evidence="1">Belongs to the RimM family.</text>
</comment>
<keyword id="KW-0143">Chaperone</keyword>
<keyword id="KW-0963">Cytoplasm</keyword>
<keyword id="KW-1185">Reference proteome</keyword>
<keyword id="KW-0690">Ribosome biogenesis</keyword>
<keyword id="KW-0698">rRNA processing</keyword>
<proteinExistence type="inferred from homology"/>